<sequence>MKQALRVAFGFLMLWAAVLHAEVRIEITQGVDSARPIGVVPFKWAGPGAAPEDIGGIVAADLRNSGKFNPLDRSRLPQQPATAQEVQPTAWSALGIDAVVVGQVTPNPDGSYNVAYQLVDTGGAPGTVLAQNSYKVNKQWLRYAGHTASDEVFEKLTGIKGAFRTRIAYVVQTNGGQFPYELRVSDYDGYNQFVVHRSPQPLMSPAWSPDGSKLAYVTFESGRSALVIQTLANGAVRQVASFPRHNGAPAFSPDGTKLAFALSKTGSLNLYVMDLASGQIRQITDGRSNNTEPTWFPDSQTLAFTSDQAGRPQVYKMNINGGAAQRITWEGSQNQDADVSSDGKFMVMVSSNNGQQHIAKQDLVTGGVQVLSSTFLDETPSLAPNGTMVIYSSSQGMGSVLNLVSTDGRFKARLPATDGQVKSPAWSPYL</sequence>
<reference key="1">
    <citation type="journal article" date="2008" name="Genome Res.">
        <title>Comparative genome analysis of Salmonella enteritidis PT4 and Salmonella gallinarum 287/91 provides insights into evolutionary and host adaptation pathways.</title>
        <authorList>
            <person name="Thomson N.R."/>
            <person name="Clayton D.J."/>
            <person name="Windhorst D."/>
            <person name="Vernikos G."/>
            <person name="Davidson S."/>
            <person name="Churcher C."/>
            <person name="Quail M.A."/>
            <person name="Stevens M."/>
            <person name="Jones M.A."/>
            <person name="Watson M."/>
            <person name="Barron A."/>
            <person name="Layton A."/>
            <person name="Pickard D."/>
            <person name="Kingsley R.A."/>
            <person name="Bignell A."/>
            <person name="Clark L."/>
            <person name="Harris B."/>
            <person name="Ormond D."/>
            <person name="Abdellah Z."/>
            <person name="Brooks K."/>
            <person name="Cherevach I."/>
            <person name="Chillingworth T."/>
            <person name="Woodward J."/>
            <person name="Norberczak H."/>
            <person name="Lord A."/>
            <person name="Arrowsmith C."/>
            <person name="Jagels K."/>
            <person name="Moule S."/>
            <person name="Mungall K."/>
            <person name="Saunders M."/>
            <person name="Whitehead S."/>
            <person name="Chabalgoity J.A."/>
            <person name="Maskell D."/>
            <person name="Humphreys T."/>
            <person name="Roberts M."/>
            <person name="Barrow P.A."/>
            <person name="Dougan G."/>
            <person name="Parkhill J."/>
        </authorList>
    </citation>
    <scope>NUCLEOTIDE SEQUENCE [LARGE SCALE GENOMIC DNA]</scope>
    <source>
        <strain>P125109</strain>
    </source>
</reference>
<proteinExistence type="inferred from homology"/>
<dbReference type="EMBL" id="AM933172">
    <property type="protein sequence ID" value="CAR32284.1"/>
    <property type="molecule type" value="Genomic_DNA"/>
</dbReference>
<dbReference type="RefSeq" id="WP_001562341.1">
    <property type="nucleotide sequence ID" value="NC_011294.1"/>
</dbReference>
<dbReference type="SMR" id="B5QX24"/>
<dbReference type="KEGG" id="set:SEN0698"/>
<dbReference type="HOGENOM" id="CLU_047123_0_0_6"/>
<dbReference type="Proteomes" id="UP000000613">
    <property type="component" value="Chromosome"/>
</dbReference>
<dbReference type="GO" id="GO:0042597">
    <property type="term" value="C:periplasmic space"/>
    <property type="evidence" value="ECO:0007669"/>
    <property type="project" value="UniProtKB-SubCell"/>
</dbReference>
<dbReference type="GO" id="GO:0051301">
    <property type="term" value="P:cell division"/>
    <property type="evidence" value="ECO:0007669"/>
    <property type="project" value="UniProtKB-UniRule"/>
</dbReference>
<dbReference type="GO" id="GO:0017038">
    <property type="term" value="P:protein import"/>
    <property type="evidence" value="ECO:0007669"/>
    <property type="project" value="InterPro"/>
</dbReference>
<dbReference type="FunFam" id="2.120.10.30:FF:000022">
    <property type="entry name" value="Tol-Pal system protein TolB"/>
    <property type="match status" value="1"/>
</dbReference>
<dbReference type="FunFam" id="3.40.50.10070:FF:000001">
    <property type="entry name" value="Tol-Pal system protein TolB"/>
    <property type="match status" value="1"/>
</dbReference>
<dbReference type="Gene3D" id="2.120.10.30">
    <property type="entry name" value="TolB, C-terminal domain"/>
    <property type="match status" value="1"/>
</dbReference>
<dbReference type="Gene3D" id="3.40.50.10070">
    <property type="entry name" value="TolB, N-terminal domain"/>
    <property type="match status" value="1"/>
</dbReference>
<dbReference type="HAMAP" id="MF_00671">
    <property type="entry name" value="TolB"/>
    <property type="match status" value="1"/>
</dbReference>
<dbReference type="InterPro" id="IPR011042">
    <property type="entry name" value="6-blade_b-propeller_TolB-like"/>
</dbReference>
<dbReference type="InterPro" id="IPR011659">
    <property type="entry name" value="PD40"/>
</dbReference>
<dbReference type="InterPro" id="IPR014167">
    <property type="entry name" value="Tol-Pal_TolB"/>
</dbReference>
<dbReference type="InterPro" id="IPR007195">
    <property type="entry name" value="TolB_N"/>
</dbReference>
<dbReference type="NCBIfam" id="TIGR02800">
    <property type="entry name" value="propeller_TolB"/>
    <property type="match status" value="1"/>
</dbReference>
<dbReference type="PANTHER" id="PTHR36842:SF1">
    <property type="entry name" value="PROTEIN TOLB"/>
    <property type="match status" value="1"/>
</dbReference>
<dbReference type="PANTHER" id="PTHR36842">
    <property type="entry name" value="PROTEIN TOLB HOMOLOG"/>
    <property type="match status" value="1"/>
</dbReference>
<dbReference type="Pfam" id="PF07676">
    <property type="entry name" value="PD40"/>
    <property type="match status" value="4"/>
</dbReference>
<dbReference type="Pfam" id="PF04052">
    <property type="entry name" value="TolB_N"/>
    <property type="match status" value="1"/>
</dbReference>
<dbReference type="SUPFAM" id="SSF52964">
    <property type="entry name" value="TolB, N-terminal domain"/>
    <property type="match status" value="1"/>
</dbReference>
<dbReference type="SUPFAM" id="SSF69304">
    <property type="entry name" value="Tricorn protease N-terminal domain"/>
    <property type="match status" value="1"/>
</dbReference>
<accession>B5QX24</accession>
<name>TOLB_SALEP</name>
<keyword id="KW-0131">Cell cycle</keyword>
<keyword id="KW-0132">Cell division</keyword>
<keyword id="KW-0574">Periplasm</keyword>
<keyword id="KW-0732">Signal</keyword>
<protein>
    <recommendedName>
        <fullName evidence="1">Tol-Pal system protein TolB</fullName>
    </recommendedName>
</protein>
<gene>
    <name evidence="1" type="primary">tolB</name>
    <name type="ordered locus">SEN0698</name>
</gene>
<evidence type="ECO:0000255" key="1">
    <source>
        <dbReference type="HAMAP-Rule" id="MF_00671"/>
    </source>
</evidence>
<feature type="signal peptide" evidence="1">
    <location>
        <begin position="1"/>
        <end position="21"/>
    </location>
</feature>
<feature type="chain" id="PRO_5000397359" description="Tol-Pal system protein TolB" evidence="1">
    <location>
        <begin position="22"/>
        <end position="430"/>
    </location>
</feature>
<organism>
    <name type="scientific">Salmonella enteritidis PT4 (strain P125109)</name>
    <dbReference type="NCBI Taxonomy" id="550537"/>
    <lineage>
        <taxon>Bacteria</taxon>
        <taxon>Pseudomonadati</taxon>
        <taxon>Pseudomonadota</taxon>
        <taxon>Gammaproteobacteria</taxon>
        <taxon>Enterobacterales</taxon>
        <taxon>Enterobacteriaceae</taxon>
        <taxon>Salmonella</taxon>
    </lineage>
</organism>
<comment type="function">
    <text evidence="1">Part of the Tol-Pal system, which plays a role in outer membrane invagination during cell division and is important for maintaining outer membrane integrity. TolB occupies a key intermediary position in the Tol-Pal system because it communicates directly with both membrane-embedded components, Pal in the outer membrane and TolA in the inner membrane.</text>
</comment>
<comment type="subunit">
    <text evidence="1">The Tol-Pal system is composed of five core proteins: the inner membrane proteins TolA, TolQ and TolR, the periplasmic protein TolB and the outer membrane protein Pal. They form a network linking the inner and outer membranes and the peptidoglycan layer.</text>
</comment>
<comment type="subcellular location">
    <subcellularLocation>
        <location evidence="1">Periplasm</location>
    </subcellularLocation>
</comment>
<comment type="similarity">
    <text evidence="1">Belongs to the TolB family.</text>
</comment>